<gene>
    <name type="primary">RPT4A</name>
    <name type="ordered locus">At5g43010</name>
    <name type="ORF">MBD2.21</name>
</gene>
<organism>
    <name type="scientific">Arabidopsis thaliana</name>
    <name type="common">Mouse-ear cress</name>
    <dbReference type="NCBI Taxonomy" id="3702"/>
    <lineage>
        <taxon>Eukaryota</taxon>
        <taxon>Viridiplantae</taxon>
        <taxon>Streptophyta</taxon>
        <taxon>Embryophyta</taxon>
        <taxon>Tracheophyta</taxon>
        <taxon>Spermatophyta</taxon>
        <taxon>Magnoliopsida</taxon>
        <taxon>eudicotyledons</taxon>
        <taxon>Gunneridae</taxon>
        <taxon>Pentapetalae</taxon>
        <taxon>rosids</taxon>
        <taxon>malvids</taxon>
        <taxon>Brassicales</taxon>
        <taxon>Brassicaceae</taxon>
        <taxon>Camelineae</taxon>
        <taxon>Arabidopsis</taxon>
    </lineage>
</organism>
<keyword id="KW-0007">Acetylation</keyword>
<keyword id="KW-0067">ATP-binding</keyword>
<keyword id="KW-0963">Cytoplasm</keyword>
<keyword id="KW-1017">Isopeptide bond</keyword>
<keyword id="KW-0547">Nucleotide-binding</keyword>
<keyword id="KW-0539">Nucleus</keyword>
<keyword id="KW-0647">Proteasome</keyword>
<keyword id="KW-1185">Reference proteome</keyword>
<keyword id="KW-0832">Ubl conjugation</keyword>
<proteinExistence type="evidence at protein level"/>
<comment type="function">
    <text>The 26S proteasome is involved in the ATP-dependent degradation of ubiquitinated proteins. The regulatory (or ATPase) complex confers ATP dependency and substrate specificity to the 26S complex.</text>
</comment>
<comment type="subunit">
    <text evidence="3 4">Component of the 19S regulatory particle (RP/PA700) base subcomplex of the 26S proteasome. The 26S proteasome is composed of a core protease (CP), known as the 20S proteasome, capped at one or both ends by the 19S regulatory particle (RP/PA700). The RP/PA700 complex is composed of at least 17 different subunits in two subcomplexes, the base and the lid, which form the portions proximal and distal to the 20S proteolytic core, respectively.</text>
</comment>
<comment type="subcellular location">
    <subcellularLocation>
        <location evidence="1">Cytoplasm</location>
    </subcellularLocation>
    <subcellularLocation>
        <location evidence="1">Nucleus</location>
    </subcellularLocation>
</comment>
<comment type="similarity">
    <text evidence="5">Belongs to the AAA ATPase family.</text>
</comment>
<comment type="sequence caution" evidence="5">
    <conflict type="erroneous initiation">
        <sequence resource="EMBL-CDS" id="BAD93877"/>
    </conflict>
    <text>Truncated N-terminus.</text>
</comment>
<protein>
    <recommendedName>
        <fullName>26S proteasome regulatory subunit 10B homolog A</fullName>
    </recommendedName>
    <alternativeName>
        <fullName>26S proteasome AAA-ATPase subunit RPT4a</fullName>
    </alternativeName>
    <alternativeName>
        <fullName>26S proteasome subunit 10B homolog A</fullName>
    </alternativeName>
    <alternativeName>
        <fullName>Regulatory particle triple-A ATPase subunit 4a</fullName>
    </alternativeName>
</protein>
<accession>Q9SEI3</accession>
<accession>Q570H6</accession>
<name>PS10A_ARATH</name>
<evidence type="ECO:0000250" key="1"/>
<evidence type="ECO:0000255" key="2"/>
<evidence type="ECO:0000269" key="3">
    <source>
    </source>
</evidence>
<evidence type="ECO:0000269" key="4">
    <source>
    </source>
</evidence>
<evidence type="ECO:0000305" key="5"/>
<evidence type="ECO:0007744" key="6">
    <source>
    </source>
</evidence>
<sequence>MTDVDESVRRRTAAVSEYRKKLLQHKELESRVRTARENLRGAKKEFNKTEDDLKSLQSVGQIIGEVLRPLDNERLIVKASSGPRYVVGCRSKVDKEKLTSGTRVVLDMTTLTIMRALPREVDPVVYNMLHEDPGNISYSAVGGLGDQIRELRESIELPLMNPELFLRVGIKPPKGVLLYGPPGTGKTLLARAIASNIDANFLKVVSSAIIDKYIGESARLIREMFNYAREHQPCIIFMDEIDAIGGRRFSEGTSADREIQRTLMELLNQLDGFDNLGKVKMIMATNRPDVLDPALLRPGRLDRKIEIPLPNEQSRMDILKIHAAGIAKHGEIDYEAIVKLAEGFNGADLRNICTEAGMFAIRAERDYVIHEDFMKAVRKLSEAKKLESSSHYNADFGKE</sequence>
<reference key="1">
    <citation type="journal article" date="1999" name="Plant J.">
        <title>Structural and functional analysis of the six regulatory particle triple-A ATPase subunits from the Arabidopsis 26S proteasome.</title>
        <authorList>
            <person name="Fu H."/>
            <person name="Doelling J.H."/>
            <person name="Rubin D.M."/>
            <person name="Vierstra R.D."/>
        </authorList>
    </citation>
    <scope>NUCLEOTIDE SEQUENCE [MRNA]</scope>
    <scope>GENE FAMILY</scope>
    <scope>NOMENCLATURE</scope>
    <source>
        <strain>cv. Columbia</strain>
    </source>
</reference>
<reference key="2">
    <citation type="journal article" date="1997" name="DNA Res.">
        <title>Structural analysis of Arabidopsis thaliana chromosome 5. III. Sequence features of the regions of 1,191,918 bp covered by seventeen physically assigned P1 clones.</title>
        <authorList>
            <person name="Nakamura Y."/>
            <person name="Sato S."/>
            <person name="Kaneko T."/>
            <person name="Kotani H."/>
            <person name="Asamizu E."/>
            <person name="Miyajima N."/>
            <person name="Tabata S."/>
        </authorList>
    </citation>
    <scope>NUCLEOTIDE SEQUENCE [LARGE SCALE GENOMIC DNA]</scope>
    <source>
        <strain>cv. Columbia</strain>
    </source>
</reference>
<reference key="3">
    <citation type="journal article" date="2017" name="Plant J.">
        <title>Araport11: a complete reannotation of the Arabidopsis thaliana reference genome.</title>
        <authorList>
            <person name="Cheng C.Y."/>
            <person name="Krishnakumar V."/>
            <person name="Chan A.P."/>
            <person name="Thibaud-Nissen F."/>
            <person name="Schobel S."/>
            <person name="Town C.D."/>
        </authorList>
    </citation>
    <scope>GENOME REANNOTATION</scope>
    <source>
        <strain>cv. Columbia</strain>
    </source>
</reference>
<reference key="4">
    <citation type="journal article" date="2003" name="Science">
        <title>Empirical analysis of transcriptional activity in the Arabidopsis genome.</title>
        <authorList>
            <person name="Yamada K."/>
            <person name="Lim J."/>
            <person name="Dale J.M."/>
            <person name="Chen H."/>
            <person name="Shinn P."/>
            <person name="Palm C.J."/>
            <person name="Southwick A.M."/>
            <person name="Wu H.C."/>
            <person name="Kim C.J."/>
            <person name="Nguyen M."/>
            <person name="Pham P.K."/>
            <person name="Cheuk R.F."/>
            <person name="Karlin-Newmann G."/>
            <person name="Liu S.X."/>
            <person name="Lam B."/>
            <person name="Sakano H."/>
            <person name="Wu T."/>
            <person name="Yu G."/>
            <person name="Miranda M."/>
            <person name="Quach H.L."/>
            <person name="Tripp M."/>
            <person name="Chang C.H."/>
            <person name="Lee J.M."/>
            <person name="Toriumi M.J."/>
            <person name="Chan M.M."/>
            <person name="Tang C.C."/>
            <person name="Onodera C.S."/>
            <person name="Deng J.M."/>
            <person name="Akiyama K."/>
            <person name="Ansari Y."/>
            <person name="Arakawa T."/>
            <person name="Banh J."/>
            <person name="Banno F."/>
            <person name="Bowser L."/>
            <person name="Brooks S.Y."/>
            <person name="Carninci P."/>
            <person name="Chao Q."/>
            <person name="Choy N."/>
            <person name="Enju A."/>
            <person name="Goldsmith A.D."/>
            <person name="Gurjal M."/>
            <person name="Hansen N.F."/>
            <person name="Hayashizaki Y."/>
            <person name="Johnson-Hopson C."/>
            <person name="Hsuan V.W."/>
            <person name="Iida K."/>
            <person name="Karnes M."/>
            <person name="Khan S."/>
            <person name="Koesema E."/>
            <person name="Ishida J."/>
            <person name="Jiang P.X."/>
            <person name="Jones T."/>
            <person name="Kawai J."/>
            <person name="Kamiya A."/>
            <person name="Meyers C."/>
            <person name="Nakajima M."/>
            <person name="Narusaka M."/>
            <person name="Seki M."/>
            <person name="Sakurai T."/>
            <person name="Satou M."/>
            <person name="Tamse R."/>
            <person name="Vaysberg M."/>
            <person name="Wallender E.K."/>
            <person name="Wong C."/>
            <person name="Yamamura Y."/>
            <person name="Yuan S."/>
            <person name="Shinozaki K."/>
            <person name="Davis R.W."/>
            <person name="Theologis A."/>
            <person name="Ecker J.R."/>
        </authorList>
    </citation>
    <scope>NUCLEOTIDE SEQUENCE [LARGE SCALE MRNA]</scope>
    <source>
        <strain>cv. Columbia</strain>
    </source>
</reference>
<reference key="5">
    <citation type="submission" date="2005-03" db="EMBL/GenBank/DDBJ databases">
        <title>Large-scale analysis of RIKEN Arabidopsis full-length (RAFL) cDNAs.</title>
        <authorList>
            <person name="Totoki Y."/>
            <person name="Seki M."/>
            <person name="Ishida J."/>
            <person name="Nakajima M."/>
            <person name="Enju A."/>
            <person name="Kamiya A."/>
            <person name="Narusaka M."/>
            <person name="Shin-i T."/>
            <person name="Nakagawa M."/>
            <person name="Sakamoto N."/>
            <person name="Oishi K."/>
            <person name="Kohara Y."/>
            <person name="Kobayashi M."/>
            <person name="Toyoda A."/>
            <person name="Sakaki Y."/>
            <person name="Sakurai T."/>
            <person name="Iida K."/>
            <person name="Akiyama K."/>
            <person name="Satou M."/>
            <person name="Toyoda T."/>
            <person name="Konagaya A."/>
            <person name="Carninci P."/>
            <person name="Kawai J."/>
            <person name="Hayashizaki Y."/>
            <person name="Shinozaki K."/>
        </authorList>
    </citation>
    <scope>NUCLEOTIDE SEQUENCE [LARGE SCALE MRNA] OF 310-399</scope>
    <source>
        <strain>cv. Columbia</strain>
    </source>
</reference>
<reference key="6">
    <citation type="journal article" date="2004" name="J. Biol. Chem.">
        <title>Purification of the Arabidopsis 26 S proteasome: biochemical and molecular analyses revealed the presence of multiple isoforms.</title>
        <authorList>
            <person name="Yang P."/>
            <person name="Fu H."/>
            <person name="Walker J."/>
            <person name="Papa C.M."/>
            <person name="Smalle J."/>
            <person name="Ju Y.-M."/>
            <person name="Vierstra R.D."/>
        </authorList>
    </citation>
    <scope>SUBUNIT</scope>
    <scope>IDENTIFICATION BY MASS SPECTROMETRY</scope>
</reference>
<reference key="7">
    <citation type="journal article" date="2010" name="J. Biol. Chem.">
        <title>Affinity purification of the Arabidopsis 26 S proteasome reveals a diverse array of plant proteolytic complexes.</title>
        <authorList>
            <person name="Book A.J."/>
            <person name="Gladman N.P."/>
            <person name="Lee S.S."/>
            <person name="Scalf M."/>
            <person name="Smith L.M."/>
            <person name="Vierstra R.D."/>
        </authorList>
    </citation>
    <scope>IDENTIFICATION BY MASS SPECTROMETRY</scope>
    <scope>CHARACTERIZATION OF THE 26S PROTEASOME COMPLEX</scope>
    <scope>SUBUNIT</scope>
    <scope>UBIQUITINATION AT LYS-203</scope>
</reference>
<reference key="8">
    <citation type="journal article" date="2012" name="Mol. Cell. Proteomics">
        <title>Comparative large-scale characterisation of plant vs. mammal proteins reveals similar and idiosyncratic N-alpha acetylation features.</title>
        <authorList>
            <person name="Bienvenut W.V."/>
            <person name="Sumpton D."/>
            <person name="Martinez A."/>
            <person name="Lilla S."/>
            <person name="Espagne C."/>
            <person name="Meinnel T."/>
            <person name="Giglione C."/>
        </authorList>
    </citation>
    <scope>ACETYLATION [LARGE SCALE ANALYSIS] AT THR-2</scope>
    <scope>CLEAVAGE OF INITIATOR METHIONINE [LARGE SCALE ANALYSIS]</scope>
    <scope>IDENTIFICATION BY MASS SPECTROMETRY [LARGE SCALE ANALYSIS]</scope>
</reference>
<feature type="initiator methionine" description="Removed" evidence="6">
    <location>
        <position position="1"/>
    </location>
</feature>
<feature type="chain" id="PRO_0000391489" description="26S proteasome regulatory subunit 10B homolog A">
    <location>
        <begin position="2"/>
        <end position="399"/>
    </location>
</feature>
<feature type="binding site" evidence="2">
    <location>
        <begin position="180"/>
        <end position="187"/>
    </location>
    <ligand>
        <name>ATP</name>
        <dbReference type="ChEBI" id="CHEBI:30616"/>
    </ligand>
</feature>
<feature type="modified residue" description="N-acetylthreonine" evidence="6">
    <location>
        <position position="2"/>
    </location>
</feature>
<feature type="cross-link" description="Glycyl lysine isopeptide (Lys-Gly) (interchain with G-Cter in ubiquitin)" evidence="4">
    <location>
        <position position="203"/>
    </location>
</feature>
<dbReference type="EMBL" id="AF123393">
    <property type="protein sequence ID" value="AAF22524.1"/>
    <property type="molecule type" value="mRNA"/>
</dbReference>
<dbReference type="EMBL" id="AB008264">
    <property type="protein sequence ID" value="BAB09203.1"/>
    <property type="molecule type" value="Genomic_DNA"/>
</dbReference>
<dbReference type="EMBL" id="CP002688">
    <property type="protein sequence ID" value="AED94900.1"/>
    <property type="molecule type" value="Genomic_DNA"/>
</dbReference>
<dbReference type="EMBL" id="AF372945">
    <property type="protein sequence ID" value="AAK50085.1"/>
    <property type="molecule type" value="mRNA"/>
</dbReference>
<dbReference type="EMBL" id="AY078040">
    <property type="protein sequence ID" value="AAL77741.1"/>
    <property type="molecule type" value="mRNA"/>
</dbReference>
<dbReference type="EMBL" id="AK220732">
    <property type="protein sequence ID" value="BAD93877.1"/>
    <property type="status" value="ALT_INIT"/>
    <property type="molecule type" value="mRNA"/>
</dbReference>
<dbReference type="RefSeq" id="NP_199115.1">
    <property type="nucleotide sequence ID" value="NM_123667.4"/>
</dbReference>
<dbReference type="SMR" id="Q9SEI3"/>
<dbReference type="BioGRID" id="19566">
    <property type="interactions" value="76"/>
</dbReference>
<dbReference type="FunCoup" id="Q9SEI3">
    <property type="interactions" value="4467"/>
</dbReference>
<dbReference type="IntAct" id="Q9SEI3">
    <property type="interactions" value="2"/>
</dbReference>
<dbReference type="STRING" id="3702.Q9SEI3"/>
<dbReference type="iPTMnet" id="Q9SEI3"/>
<dbReference type="PaxDb" id="3702-AT5G43010.1"/>
<dbReference type="ProteomicsDB" id="226298"/>
<dbReference type="EnsemblPlants" id="AT5G43010.1">
    <property type="protein sequence ID" value="AT5G43010.1"/>
    <property type="gene ID" value="AT5G43010"/>
</dbReference>
<dbReference type="GeneID" id="834316"/>
<dbReference type="Gramene" id="AT5G43010.1">
    <property type="protein sequence ID" value="AT5G43010.1"/>
    <property type="gene ID" value="AT5G43010"/>
</dbReference>
<dbReference type="KEGG" id="ath:AT5G43010"/>
<dbReference type="Araport" id="AT5G43010"/>
<dbReference type="TAIR" id="AT5G43010">
    <property type="gene designation" value="RPT4A"/>
</dbReference>
<dbReference type="eggNOG" id="KOG0651">
    <property type="taxonomic scope" value="Eukaryota"/>
</dbReference>
<dbReference type="HOGENOM" id="CLU_000688_2_2_1"/>
<dbReference type="InParanoid" id="Q9SEI3"/>
<dbReference type="OMA" id="DHEPCVI"/>
<dbReference type="OrthoDB" id="881637at2759"/>
<dbReference type="PhylomeDB" id="Q9SEI3"/>
<dbReference type="PRO" id="PR:Q9SEI3"/>
<dbReference type="Proteomes" id="UP000006548">
    <property type="component" value="Chromosome 5"/>
</dbReference>
<dbReference type="ExpressionAtlas" id="Q9SEI3">
    <property type="expression patterns" value="baseline and differential"/>
</dbReference>
<dbReference type="GO" id="GO:0005737">
    <property type="term" value="C:cytoplasm"/>
    <property type="evidence" value="ECO:0007669"/>
    <property type="project" value="UniProtKB-SubCell"/>
</dbReference>
<dbReference type="GO" id="GO:0005634">
    <property type="term" value="C:nucleus"/>
    <property type="evidence" value="ECO:0000304"/>
    <property type="project" value="TAIR"/>
</dbReference>
<dbReference type="GO" id="GO:0009505">
    <property type="term" value="C:plant-type cell wall"/>
    <property type="evidence" value="ECO:0007005"/>
    <property type="project" value="TAIR"/>
</dbReference>
<dbReference type="GO" id="GO:0000502">
    <property type="term" value="C:proteasome complex"/>
    <property type="evidence" value="ECO:0000314"/>
    <property type="project" value="TAIR"/>
</dbReference>
<dbReference type="GO" id="GO:0005524">
    <property type="term" value="F:ATP binding"/>
    <property type="evidence" value="ECO:0007669"/>
    <property type="project" value="UniProtKB-KW"/>
</dbReference>
<dbReference type="GO" id="GO:0016887">
    <property type="term" value="F:ATP hydrolysis activity"/>
    <property type="evidence" value="ECO:0007669"/>
    <property type="project" value="InterPro"/>
</dbReference>
<dbReference type="FunFam" id="1.10.8.60:FF:000008">
    <property type="entry name" value="26S protease regulatory subunit 10B"/>
    <property type="match status" value="1"/>
</dbReference>
<dbReference type="FunFam" id="2.40.50.140:FF:000027">
    <property type="entry name" value="26S protease regulatory subunit 10B"/>
    <property type="match status" value="1"/>
</dbReference>
<dbReference type="FunFam" id="3.40.50.300:FF:000034">
    <property type="entry name" value="26S protease regulatory subunit 10B"/>
    <property type="match status" value="1"/>
</dbReference>
<dbReference type="Gene3D" id="1.10.8.60">
    <property type="match status" value="1"/>
</dbReference>
<dbReference type="Gene3D" id="2.40.50.140">
    <property type="entry name" value="Nucleic acid-binding proteins"/>
    <property type="match status" value="1"/>
</dbReference>
<dbReference type="Gene3D" id="3.40.50.300">
    <property type="entry name" value="P-loop containing nucleotide triphosphate hydrolases"/>
    <property type="match status" value="1"/>
</dbReference>
<dbReference type="InterPro" id="IPR050221">
    <property type="entry name" value="26S_Proteasome_ATPase"/>
</dbReference>
<dbReference type="InterPro" id="IPR003593">
    <property type="entry name" value="AAA+_ATPase"/>
</dbReference>
<dbReference type="InterPro" id="IPR041569">
    <property type="entry name" value="AAA_lid_3"/>
</dbReference>
<dbReference type="InterPro" id="IPR003959">
    <property type="entry name" value="ATPase_AAA_core"/>
</dbReference>
<dbReference type="InterPro" id="IPR003960">
    <property type="entry name" value="ATPase_AAA_CS"/>
</dbReference>
<dbReference type="InterPro" id="IPR012340">
    <property type="entry name" value="NA-bd_OB-fold"/>
</dbReference>
<dbReference type="InterPro" id="IPR027417">
    <property type="entry name" value="P-loop_NTPase"/>
</dbReference>
<dbReference type="InterPro" id="IPR032501">
    <property type="entry name" value="Prot_ATP_ID_OB_2nd"/>
</dbReference>
<dbReference type="PANTHER" id="PTHR23073">
    <property type="entry name" value="26S PROTEASOME REGULATORY SUBUNIT"/>
    <property type="match status" value="1"/>
</dbReference>
<dbReference type="Pfam" id="PF00004">
    <property type="entry name" value="AAA"/>
    <property type="match status" value="1"/>
</dbReference>
<dbReference type="Pfam" id="PF17862">
    <property type="entry name" value="AAA_lid_3"/>
    <property type="match status" value="1"/>
</dbReference>
<dbReference type="Pfam" id="PF16450">
    <property type="entry name" value="Prot_ATP_ID_OB_C"/>
    <property type="match status" value="1"/>
</dbReference>
<dbReference type="SMART" id="SM00382">
    <property type="entry name" value="AAA"/>
    <property type="match status" value="1"/>
</dbReference>
<dbReference type="SUPFAM" id="SSF52540">
    <property type="entry name" value="P-loop containing nucleoside triphosphate hydrolases"/>
    <property type="match status" value="1"/>
</dbReference>
<dbReference type="PROSITE" id="PS00674">
    <property type="entry name" value="AAA"/>
    <property type="match status" value="1"/>
</dbReference>